<accession>Q7WI95</accession>
<comment type="function">
    <text evidence="1">Pyrophosphatase that catalyzes the hydrolysis of nucleoside triphosphates to their monophosphate derivatives, with a high preference for the non-canonical purine nucleotides XTP (xanthosine triphosphate), dITP (deoxyinosine triphosphate) and ITP. Seems to function as a house-cleaning enzyme that removes non-canonical purine nucleotides from the nucleotide pool, thus preventing their incorporation into DNA/RNA and avoiding chromosomal lesions.</text>
</comment>
<comment type="catalytic activity">
    <reaction evidence="1">
        <text>XTP + H2O = XMP + diphosphate + H(+)</text>
        <dbReference type="Rhea" id="RHEA:28610"/>
        <dbReference type="ChEBI" id="CHEBI:15377"/>
        <dbReference type="ChEBI" id="CHEBI:15378"/>
        <dbReference type="ChEBI" id="CHEBI:33019"/>
        <dbReference type="ChEBI" id="CHEBI:57464"/>
        <dbReference type="ChEBI" id="CHEBI:61314"/>
        <dbReference type="EC" id="3.6.1.66"/>
    </reaction>
</comment>
<comment type="catalytic activity">
    <reaction evidence="1">
        <text>dITP + H2O = dIMP + diphosphate + H(+)</text>
        <dbReference type="Rhea" id="RHEA:28342"/>
        <dbReference type="ChEBI" id="CHEBI:15377"/>
        <dbReference type="ChEBI" id="CHEBI:15378"/>
        <dbReference type="ChEBI" id="CHEBI:33019"/>
        <dbReference type="ChEBI" id="CHEBI:61194"/>
        <dbReference type="ChEBI" id="CHEBI:61382"/>
        <dbReference type="EC" id="3.6.1.66"/>
    </reaction>
</comment>
<comment type="catalytic activity">
    <reaction evidence="1">
        <text>ITP + H2O = IMP + diphosphate + H(+)</text>
        <dbReference type="Rhea" id="RHEA:29399"/>
        <dbReference type="ChEBI" id="CHEBI:15377"/>
        <dbReference type="ChEBI" id="CHEBI:15378"/>
        <dbReference type="ChEBI" id="CHEBI:33019"/>
        <dbReference type="ChEBI" id="CHEBI:58053"/>
        <dbReference type="ChEBI" id="CHEBI:61402"/>
        <dbReference type="EC" id="3.6.1.66"/>
    </reaction>
</comment>
<comment type="cofactor">
    <cofactor evidence="1">
        <name>Mg(2+)</name>
        <dbReference type="ChEBI" id="CHEBI:18420"/>
    </cofactor>
    <text evidence="1">Binds 1 Mg(2+) ion per subunit.</text>
</comment>
<comment type="subunit">
    <text evidence="1">Homodimer.</text>
</comment>
<comment type="similarity">
    <text evidence="1">Belongs to the HAM1 NTPase family.</text>
</comment>
<comment type="sequence caution" evidence="2">
    <conflict type="erroneous initiation">
        <sequence resource="EMBL-CDS" id="CAE33448"/>
    </conflict>
</comment>
<evidence type="ECO:0000255" key="1">
    <source>
        <dbReference type="HAMAP-Rule" id="MF_01405"/>
    </source>
</evidence>
<evidence type="ECO:0000305" key="2"/>
<organism>
    <name type="scientific">Bordetella bronchiseptica (strain ATCC BAA-588 / NCTC 13252 / RB50)</name>
    <name type="common">Alcaligenes bronchisepticus</name>
    <dbReference type="NCBI Taxonomy" id="257310"/>
    <lineage>
        <taxon>Bacteria</taxon>
        <taxon>Pseudomonadati</taxon>
        <taxon>Pseudomonadota</taxon>
        <taxon>Betaproteobacteria</taxon>
        <taxon>Burkholderiales</taxon>
        <taxon>Alcaligenaceae</taxon>
        <taxon>Bordetella</taxon>
    </lineage>
</organism>
<keyword id="KW-0378">Hydrolase</keyword>
<keyword id="KW-0460">Magnesium</keyword>
<keyword id="KW-0479">Metal-binding</keyword>
<keyword id="KW-0546">Nucleotide metabolism</keyword>
<keyword id="KW-0547">Nucleotide-binding</keyword>
<feature type="chain" id="PRO_0000178135" description="dITP/XTP pyrophosphatase">
    <location>
        <begin position="1"/>
        <end position="213"/>
    </location>
</feature>
<feature type="active site" description="Proton acceptor" evidence="1">
    <location>
        <position position="78"/>
    </location>
</feature>
<feature type="binding site" evidence="1">
    <location>
        <begin position="17"/>
        <end position="22"/>
    </location>
    <ligand>
        <name>substrate</name>
    </ligand>
</feature>
<feature type="binding site" evidence="1">
    <location>
        <position position="49"/>
    </location>
    <ligand>
        <name>Mg(2+)</name>
        <dbReference type="ChEBI" id="CHEBI:18420"/>
    </ligand>
</feature>
<feature type="binding site" evidence="1">
    <location>
        <position position="78"/>
    </location>
    <ligand>
        <name>Mg(2+)</name>
        <dbReference type="ChEBI" id="CHEBI:18420"/>
    </ligand>
</feature>
<feature type="binding site" evidence="1">
    <location>
        <position position="79"/>
    </location>
    <ligand>
        <name>substrate</name>
    </ligand>
</feature>
<feature type="binding site" evidence="1">
    <location>
        <begin position="164"/>
        <end position="167"/>
    </location>
    <ligand>
        <name>substrate</name>
    </ligand>
</feature>
<feature type="binding site" evidence="1">
    <location>
        <position position="187"/>
    </location>
    <ligand>
        <name>substrate</name>
    </ligand>
</feature>
<feature type="binding site" evidence="1">
    <location>
        <begin position="192"/>
        <end position="193"/>
    </location>
    <ligand>
        <name>substrate</name>
    </ligand>
</feature>
<proteinExistence type="inferred from homology"/>
<dbReference type="EC" id="3.6.1.66" evidence="1"/>
<dbReference type="EMBL" id="BX640446">
    <property type="protein sequence ID" value="CAE33448.1"/>
    <property type="status" value="ALT_INIT"/>
    <property type="molecule type" value="Genomic_DNA"/>
</dbReference>
<dbReference type="SMR" id="Q7WI95"/>
<dbReference type="KEGG" id="bbr:BB2956"/>
<dbReference type="eggNOG" id="COG0127">
    <property type="taxonomic scope" value="Bacteria"/>
</dbReference>
<dbReference type="HOGENOM" id="CLU_082080_0_3_4"/>
<dbReference type="Proteomes" id="UP000001027">
    <property type="component" value="Chromosome"/>
</dbReference>
<dbReference type="GO" id="GO:0005829">
    <property type="term" value="C:cytosol"/>
    <property type="evidence" value="ECO:0007669"/>
    <property type="project" value="TreeGrafter"/>
</dbReference>
<dbReference type="GO" id="GO:0035870">
    <property type="term" value="F:dITP diphosphatase activity"/>
    <property type="evidence" value="ECO:0007669"/>
    <property type="project" value="RHEA"/>
</dbReference>
<dbReference type="GO" id="GO:0036220">
    <property type="term" value="F:ITP diphosphatase activity"/>
    <property type="evidence" value="ECO:0007669"/>
    <property type="project" value="UniProtKB-EC"/>
</dbReference>
<dbReference type="GO" id="GO:0046872">
    <property type="term" value="F:metal ion binding"/>
    <property type="evidence" value="ECO:0007669"/>
    <property type="project" value="UniProtKB-KW"/>
</dbReference>
<dbReference type="GO" id="GO:0000166">
    <property type="term" value="F:nucleotide binding"/>
    <property type="evidence" value="ECO:0007669"/>
    <property type="project" value="UniProtKB-KW"/>
</dbReference>
<dbReference type="GO" id="GO:0017111">
    <property type="term" value="F:ribonucleoside triphosphate phosphatase activity"/>
    <property type="evidence" value="ECO:0007669"/>
    <property type="project" value="InterPro"/>
</dbReference>
<dbReference type="GO" id="GO:0036222">
    <property type="term" value="F:XTP diphosphatase activity"/>
    <property type="evidence" value="ECO:0007669"/>
    <property type="project" value="RHEA"/>
</dbReference>
<dbReference type="GO" id="GO:0009117">
    <property type="term" value="P:nucleotide metabolic process"/>
    <property type="evidence" value="ECO:0007669"/>
    <property type="project" value="UniProtKB-KW"/>
</dbReference>
<dbReference type="GO" id="GO:0009146">
    <property type="term" value="P:purine nucleoside triphosphate catabolic process"/>
    <property type="evidence" value="ECO:0007669"/>
    <property type="project" value="UniProtKB-UniRule"/>
</dbReference>
<dbReference type="CDD" id="cd00515">
    <property type="entry name" value="HAM1"/>
    <property type="match status" value="1"/>
</dbReference>
<dbReference type="FunFam" id="3.90.950.10:FF:000001">
    <property type="entry name" value="dITP/XTP pyrophosphatase"/>
    <property type="match status" value="1"/>
</dbReference>
<dbReference type="Gene3D" id="3.90.950.10">
    <property type="match status" value="1"/>
</dbReference>
<dbReference type="HAMAP" id="MF_01405">
    <property type="entry name" value="Non_canon_purine_NTPase"/>
    <property type="match status" value="1"/>
</dbReference>
<dbReference type="InterPro" id="IPR020922">
    <property type="entry name" value="dITP/XTP_pyrophosphatase"/>
</dbReference>
<dbReference type="InterPro" id="IPR029001">
    <property type="entry name" value="ITPase-like_fam"/>
</dbReference>
<dbReference type="InterPro" id="IPR002637">
    <property type="entry name" value="RdgB/HAM1"/>
</dbReference>
<dbReference type="NCBIfam" id="TIGR00042">
    <property type="entry name" value="RdgB/HAM1 family non-canonical purine NTP pyrophosphatase"/>
    <property type="match status" value="1"/>
</dbReference>
<dbReference type="PANTHER" id="PTHR11067:SF9">
    <property type="entry name" value="INOSINE TRIPHOSPHATE PYROPHOSPHATASE"/>
    <property type="match status" value="1"/>
</dbReference>
<dbReference type="PANTHER" id="PTHR11067">
    <property type="entry name" value="INOSINE TRIPHOSPHATE PYROPHOSPHATASE/HAM1 PROTEIN"/>
    <property type="match status" value="1"/>
</dbReference>
<dbReference type="Pfam" id="PF01725">
    <property type="entry name" value="Ham1p_like"/>
    <property type="match status" value="1"/>
</dbReference>
<dbReference type="SUPFAM" id="SSF52972">
    <property type="entry name" value="ITPase-like"/>
    <property type="match status" value="1"/>
</dbReference>
<name>IXTPA_BORBR</name>
<sequence length="213" mass="22591">MSAEILNPNLRRVVLASNNAGKLREFSALFAPLGIELVPQSELGVSEAEEPHATFVENALAKARHASRHTGLPALADDSGLCVVALGGAPGVHSARYAQQPGGARSDAANNALLVRELAAAGDRRAWYVALLALVRTENDPCPLIGEGLWHGEIVDAPAGEHGFGYDPHFYLPQQGCTAAQLAPEHKNRISHRAQALAQLLDKLRATGPVDRP</sequence>
<protein>
    <recommendedName>
        <fullName evidence="1">dITP/XTP pyrophosphatase</fullName>
        <ecNumber evidence="1">3.6.1.66</ecNumber>
    </recommendedName>
    <alternativeName>
        <fullName evidence="1">Non-canonical purine NTP pyrophosphatase</fullName>
    </alternativeName>
    <alternativeName>
        <fullName evidence="1">Non-standard purine NTP pyrophosphatase</fullName>
    </alternativeName>
    <alternativeName>
        <fullName evidence="1">Nucleoside-triphosphate diphosphatase</fullName>
    </alternativeName>
    <alternativeName>
        <fullName evidence="1">Nucleoside-triphosphate pyrophosphatase</fullName>
        <shortName evidence="1">NTPase</shortName>
    </alternativeName>
</protein>
<reference key="1">
    <citation type="journal article" date="2003" name="Nat. Genet.">
        <title>Comparative analysis of the genome sequences of Bordetella pertussis, Bordetella parapertussis and Bordetella bronchiseptica.</title>
        <authorList>
            <person name="Parkhill J."/>
            <person name="Sebaihia M."/>
            <person name="Preston A."/>
            <person name="Murphy L.D."/>
            <person name="Thomson N.R."/>
            <person name="Harris D.E."/>
            <person name="Holden M.T.G."/>
            <person name="Churcher C.M."/>
            <person name="Bentley S.D."/>
            <person name="Mungall K.L."/>
            <person name="Cerdeno-Tarraga A.-M."/>
            <person name="Temple L."/>
            <person name="James K.D."/>
            <person name="Harris B."/>
            <person name="Quail M.A."/>
            <person name="Achtman M."/>
            <person name="Atkin R."/>
            <person name="Baker S."/>
            <person name="Basham D."/>
            <person name="Bason N."/>
            <person name="Cherevach I."/>
            <person name="Chillingworth T."/>
            <person name="Collins M."/>
            <person name="Cronin A."/>
            <person name="Davis P."/>
            <person name="Doggett J."/>
            <person name="Feltwell T."/>
            <person name="Goble A."/>
            <person name="Hamlin N."/>
            <person name="Hauser H."/>
            <person name="Holroyd S."/>
            <person name="Jagels K."/>
            <person name="Leather S."/>
            <person name="Moule S."/>
            <person name="Norberczak H."/>
            <person name="O'Neil S."/>
            <person name="Ormond D."/>
            <person name="Price C."/>
            <person name="Rabbinowitsch E."/>
            <person name="Rutter S."/>
            <person name="Sanders M."/>
            <person name="Saunders D."/>
            <person name="Seeger K."/>
            <person name="Sharp S."/>
            <person name="Simmonds M."/>
            <person name="Skelton J."/>
            <person name="Squares R."/>
            <person name="Squares S."/>
            <person name="Stevens K."/>
            <person name="Unwin L."/>
            <person name="Whitehead S."/>
            <person name="Barrell B.G."/>
            <person name="Maskell D.J."/>
        </authorList>
    </citation>
    <scope>NUCLEOTIDE SEQUENCE [LARGE SCALE GENOMIC DNA]</scope>
    <source>
        <strain>ATCC BAA-588 / NCTC 13252 / RB50</strain>
    </source>
</reference>
<gene>
    <name type="ordered locus">BB2956</name>
</gene>